<accession>B5Z4N0</accession>
<reference key="1">
    <citation type="journal article" date="2011" name="Proc. Natl. Acad. Sci. U.S.A.">
        <title>Genomic anatomy of Escherichia coli O157:H7 outbreaks.</title>
        <authorList>
            <person name="Eppinger M."/>
            <person name="Mammel M.K."/>
            <person name="Leclerc J.E."/>
            <person name="Ravel J."/>
            <person name="Cebula T.A."/>
        </authorList>
    </citation>
    <scope>NUCLEOTIDE SEQUENCE [LARGE SCALE GENOMIC DNA]</scope>
    <source>
        <strain>EC4115 / EHEC</strain>
    </source>
</reference>
<comment type="function">
    <text evidence="1">Involved in the degradation and recycling of damaged RNA. It is itself a target for degradation by the ATP-dependent protease Lon.</text>
</comment>
<comment type="subcellular location">
    <subcellularLocation>
        <location evidence="1">Cytoplasm</location>
    </subcellularLocation>
</comment>
<comment type="similarity">
    <text evidence="1">Belongs to the SymE family.</text>
</comment>
<protein>
    <recommendedName>
        <fullName evidence="1">Endoribonuclease SymE</fullName>
        <ecNumber evidence="1">3.1.-.-</ecNumber>
    </recommendedName>
</protein>
<keyword id="KW-0963">Cytoplasm</keyword>
<keyword id="KW-0238">DNA-binding</keyword>
<keyword id="KW-0255">Endonuclease</keyword>
<keyword id="KW-0378">Hydrolase</keyword>
<keyword id="KW-0540">Nuclease</keyword>
<keyword id="KW-0694">RNA-binding</keyword>
<organism>
    <name type="scientific">Escherichia coli O157:H7 (strain EC4115 / EHEC)</name>
    <dbReference type="NCBI Taxonomy" id="444450"/>
    <lineage>
        <taxon>Bacteria</taxon>
        <taxon>Pseudomonadati</taxon>
        <taxon>Pseudomonadota</taxon>
        <taxon>Gammaproteobacteria</taxon>
        <taxon>Enterobacterales</taxon>
        <taxon>Enterobacteriaceae</taxon>
        <taxon>Escherichia</taxon>
    </lineage>
</organism>
<sequence>MTDTHSIAQPFEAEVSPANNRQLTVSYASRYPDYSRIPAITLKGQWLEAAGFATGTVVDVKVMEGCIVLTAQPPAAAESELMQSLRQVCKLSARKQRQVQEFIGVIAGKQKVA</sequence>
<proteinExistence type="inferred from homology"/>
<name>SYME_ECO5E</name>
<feature type="chain" id="PRO_1000138400" description="Endoribonuclease SymE">
    <location>
        <begin position="1"/>
        <end position="113"/>
    </location>
</feature>
<feature type="domain" description="SpoVT-AbrB" evidence="2">
    <location>
        <begin position="29"/>
        <end position="74"/>
    </location>
</feature>
<evidence type="ECO:0000255" key="1">
    <source>
        <dbReference type="HAMAP-Rule" id="MF_01193"/>
    </source>
</evidence>
<evidence type="ECO:0000255" key="2">
    <source>
        <dbReference type="PROSITE-ProRule" id="PRU01076"/>
    </source>
</evidence>
<dbReference type="EC" id="3.1.-.-" evidence="1"/>
<dbReference type="EMBL" id="CP001164">
    <property type="protein sequence ID" value="ACI35501.1"/>
    <property type="molecule type" value="Genomic_DNA"/>
</dbReference>
<dbReference type="RefSeq" id="WP_000132630.1">
    <property type="nucleotide sequence ID" value="NC_011353.1"/>
</dbReference>
<dbReference type="KEGG" id="ecf:ECH74115_5858"/>
<dbReference type="HOGENOM" id="CLU_151239_0_0_6"/>
<dbReference type="GO" id="GO:0005737">
    <property type="term" value="C:cytoplasm"/>
    <property type="evidence" value="ECO:0007669"/>
    <property type="project" value="UniProtKB-SubCell"/>
</dbReference>
<dbReference type="GO" id="GO:0003677">
    <property type="term" value="F:DNA binding"/>
    <property type="evidence" value="ECO:0007669"/>
    <property type="project" value="UniProtKB-KW"/>
</dbReference>
<dbReference type="GO" id="GO:0003723">
    <property type="term" value="F:RNA binding"/>
    <property type="evidence" value="ECO:0007669"/>
    <property type="project" value="UniProtKB-KW"/>
</dbReference>
<dbReference type="GO" id="GO:0004521">
    <property type="term" value="F:RNA endonuclease activity"/>
    <property type="evidence" value="ECO:0007669"/>
    <property type="project" value="UniProtKB-UniRule"/>
</dbReference>
<dbReference type="GO" id="GO:0016070">
    <property type="term" value="P:RNA metabolic process"/>
    <property type="evidence" value="ECO:0007669"/>
    <property type="project" value="InterPro"/>
</dbReference>
<dbReference type="HAMAP" id="MF_01193">
    <property type="entry name" value="Endoribonucl_SymE"/>
    <property type="match status" value="1"/>
</dbReference>
<dbReference type="InterPro" id="IPR007159">
    <property type="entry name" value="SpoVT-AbrB_dom"/>
</dbReference>
<dbReference type="InterPro" id="IPR014944">
    <property type="entry name" value="Toxin_SymE-like"/>
</dbReference>
<dbReference type="InterPro" id="IPR020883">
    <property type="entry name" value="TypeI_TA_SymE"/>
</dbReference>
<dbReference type="NCBIfam" id="NF010128">
    <property type="entry name" value="PRK13605.1"/>
    <property type="match status" value="1"/>
</dbReference>
<dbReference type="Pfam" id="PF08845">
    <property type="entry name" value="SymE_toxin"/>
    <property type="match status" value="1"/>
</dbReference>
<dbReference type="PROSITE" id="PS51740">
    <property type="entry name" value="SPOVT_ABRB"/>
    <property type="match status" value="1"/>
</dbReference>
<gene>
    <name evidence="1" type="primary">symE</name>
    <name type="ordered locus">ECH74115_5858</name>
</gene>